<geneLocation type="plasmid">
    <name>bp7E</name>
</geneLocation>
<geneLocation type="plasmid">
    <name>lp32-1</name>
</geneLocation>
<geneLocation type="plasmid">
    <name>lp7E</name>
</geneLocation>
<accession>P21876</accession>
<accession>Q3S4W5</accession>
<evidence type="ECO:0000269" key="1">
    <source>
    </source>
</evidence>
<evidence type="ECO:0000269" key="2">
    <source>
    </source>
</evidence>
<evidence type="ECO:0000303" key="3">
    <source>
    </source>
</evidence>
<evidence type="ECO:0000303" key="4">
    <source>
    </source>
</evidence>
<evidence type="ECO:0000305" key="5"/>
<evidence type="ECO:0000305" key="6">
    <source>
    </source>
</evidence>
<evidence type="ECO:0000305" key="7">
    <source>
    </source>
</evidence>
<keyword id="KW-0998">Cell outer membrane</keyword>
<keyword id="KW-0903">Direct protein sequencing</keyword>
<keyword id="KW-0449">Lipoprotein</keyword>
<keyword id="KW-0472">Membrane</keyword>
<keyword id="KW-0564">Palmitate</keyword>
<keyword id="KW-0614">Plasmid</keyword>
<keyword id="KW-0732">Signal</keyword>
<feature type="signal peptide" evidence="5">
    <location>
        <begin position="1"/>
        <end position="26"/>
    </location>
</feature>
<feature type="chain" id="PRO_0000018087" description="Variable large protein 7">
    <location>
        <begin position="27"/>
        <end position="369"/>
    </location>
</feature>
<feature type="lipid moiety-binding region" description="N-palmitoyl cysteine" evidence="5">
    <location>
        <position position="27"/>
    </location>
</feature>
<feature type="lipid moiety-binding region" description="S-diacylglycerol cysteine" evidence="5">
    <location>
        <position position="27"/>
    </location>
</feature>
<gene>
    <name evidence="4" type="primary">vlp7</name>
    <name evidence="3" type="synonym">vmp7</name>
</gene>
<proteinExistence type="evidence at protein level"/>
<sequence>MRKRISAIINKLNISIIIMTVVLMIGCGQQPEAGKTGVSGGVNGNLGNSLMELGRSAENAFYAFIELVSDVLGFTAKSDTTKQEVGGYFNSLGAKLGEASNDLEQVAVKAETGVDKSDSSKNPIREAVNEAKEVLGTLKGYVESLGTIGDSNPVGYANNAAGSGTTAADDELRKAFKALQEIVKAATDAGVKALKIGATTLQANGGADNKEGAKILATSGGNPAAADVAKAAAILSSVSGEEMLSSIVKSGENDAQLAAAADGNTSAISFAKGGSDAHLAGANTPKAAAVAGGIALRSLVKTGKLAAGAADNATGGGKEVQGVGVAAANKLLRAVEDVIKKTVKNVLEKAKEKIDKARGSQEPVSESSK</sequence>
<name>VLP7_BORHE</name>
<protein>
    <recommendedName>
        <fullName evidence="4">Variable large protein 7</fullName>
    </recommendedName>
    <alternativeName>
        <fullName evidence="3">Variable major outer membrane lipoprotein 7</fullName>
    </alternativeName>
</protein>
<comment type="function">
    <text evidence="1 2">The Vlp and Vsp proteins are antigenically distinct proteins, only one vlp or vsp gene is transcriptionally active at any one time. Switching between these genes is a mechanism of host immune response evasion.</text>
</comment>
<comment type="subcellular location">
    <subcellularLocation>
        <location evidence="6">Cell outer membrane</location>
        <topology>Lipid-anchor</topology>
    </subcellularLocation>
</comment>
<comment type="miscellaneous">
    <text evidence="7">Genes for both Vlp and Vsp families are on (usually) unnamed linear plasmids in B.hermsii HS1.</text>
</comment>
<comment type="similarity">
    <text evidence="5">Belongs to the variable large protein (Vlp) family. Alpha subfamily.</text>
</comment>
<reference key="1">
    <citation type="journal article" date="1990" name="Mol. Microbiol.">
        <title>The variable antigens Vmp7 and Vmp21 of the relapsing fever bacterium Borrelia hermsii are structurally analogous to the VSG proteins of the African trypanosome.</title>
        <authorList>
            <person name="Burman N."/>
            <person name="Bergstroem S."/>
            <person name="Restrepo B.I."/>
            <person name="Barbour A.G."/>
        </authorList>
    </citation>
    <scope>NUCLEOTIDE SEQUENCE [GENOMIC DNA]</scope>
    <source>
        <strain>ATCC 35209 / HS1</strain>
        <plasmid>bp7E</plasmid>
    </source>
</reference>
<reference key="2">
    <citation type="journal article" date="1991" name="Infect. Immun.">
        <title>Tandem insertion sequence-like elements define the expression site for variable antigen genes of Borrelia hermsii.</title>
        <authorList>
            <person name="Barbour A.G."/>
            <person name="Carter C.J."/>
            <person name="Burman N."/>
            <person name="Freitag C.S."/>
            <person name="Garon C.F."/>
            <person name="Bergstrom S."/>
        </authorList>
    </citation>
    <scope>NUCLEOTIDE SEQUENCE [GENOMIC DNA]</scope>
    <source>
        <strain>ATCC 35209 / HS1</strain>
        <plasmid>bp7E</plasmid>
    </source>
</reference>
<reference key="3">
    <citation type="journal article" date="1992" name="Mol. Microbiol.">
        <title>Subtelomeric expression regions of Borrelia hermsii linear plasmids are highly polymorphic.</title>
        <authorList>
            <person name="Restrepo B.I."/>
            <person name="Kitten T."/>
            <person name="Carter C.J."/>
            <person name="Infante D."/>
            <person name="Barbour A.G."/>
        </authorList>
    </citation>
    <scope>NUCLEOTIDE SEQUENCE [GENOMIC DNA]</scope>
    <source>
        <strain>ATCC 35209 / HS1</strain>
        <plasmid>lp7E</plasmid>
    </source>
</reference>
<reference key="4">
    <citation type="submission" date="2005-08" db="EMBL/GenBank/DDBJ databases">
        <title>Antigenic variation during relapsing fever through recombination between extragenic sequences.</title>
        <authorList>
            <person name="Dai Q."/>
            <person name="Restrepo B.I."/>
            <person name="Porcella S.F."/>
            <person name="Schwan T.G."/>
            <person name="Barbour A.G."/>
        </authorList>
    </citation>
    <scope>NUCLEOTIDE SEQUENCE [GENOMIC DNA]</scope>
    <source>
        <strain>ATCC 35209 / HS1</strain>
        <plasmid>lp32-1</plasmid>
    </source>
</reference>
<reference key="5">
    <citation type="journal article" date="1985" name="J. Exp. Med.">
        <title>Variable major proteins of Borrelia hermsii. Epitope mapping and partial sequence analysis of CNBr peptides.</title>
        <authorList>
            <person name="Barstad P.A."/>
            <person name="Coligan J.E."/>
            <person name="Raum M.G."/>
            <person name="Barbour A.G."/>
        </authorList>
    </citation>
    <scope>PROTEIN SEQUENCE OF 52-72 AND 244-258</scope>
    <scope>SUBCELLULAR LOCATION</scope>
</reference>
<reference key="6">
    <citation type="journal article" date="1990" name="Proc. Natl. Acad. Sci. U.S.A.">
        <title>Juxtaposition of expressed variable antigen genes with a conserved telomere in the bacterium Borrelia hermsii.</title>
        <authorList>
            <person name="Kitten T."/>
            <person name="Barbour A.G."/>
        </authorList>
    </citation>
    <scope>FUNCTION</scope>
    <source>
        <strain>ATCC 35209 / HS1</strain>
        <plasmid>bp7E</plasmid>
    </source>
</reference>
<reference key="7">
    <citation type="journal article" date="1998" name="Infect. Immun.">
        <title>Population structure of the relapsing fever spirochete Borrelia hermsii as indicated by polymorphism of two multigene families that encode immunogenic outer surface lipoproteins.</title>
        <authorList>
            <person name="Hinnebusch B.J."/>
            <person name="Barbour A.G."/>
            <person name="Restrepo B.I."/>
            <person name="Schwan T.G."/>
        </authorList>
    </citation>
    <scope>NOMENCLATURE</scope>
</reference>
<reference key="8">
    <citation type="journal article" date="2001" name="Infect. Immun.">
        <title>In vitro and in vivo neutralization of the relapsing fever agent Borrelia hermsii with serotype-specific immunoglobulin M antibodies.</title>
        <authorList>
            <person name="Barbour A.G."/>
            <person name="Bundoc V."/>
        </authorList>
    </citation>
    <scope>FUNCTION</scope>
</reference>
<dbReference type="EMBL" id="X53926">
    <property type="protein sequence ID" value="CAA37873.1"/>
    <property type="molecule type" value="Genomic_DNA"/>
</dbReference>
<dbReference type="EMBL" id="DQ218042">
    <property type="protein sequence ID" value="ABC55440.1"/>
    <property type="molecule type" value="Genomic_DNA"/>
</dbReference>
<dbReference type="EMBL" id="DQ166207">
    <property type="protein sequence ID" value="AAZ94629.1"/>
    <property type="molecule type" value="Genomic_DNA"/>
</dbReference>
<dbReference type="PIR" id="A43579">
    <property type="entry name" value="A43579"/>
</dbReference>
<dbReference type="PIR" id="S11980">
    <property type="entry name" value="S11980"/>
</dbReference>
<dbReference type="RefSeq" id="WP_015633304.1">
    <property type="nucleotide sequence ID" value="NZ_CP161010.1"/>
</dbReference>
<dbReference type="SMR" id="P21876"/>
<dbReference type="OrthoDB" id="351090at2"/>
<dbReference type="GO" id="GO:0009279">
    <property type="term" value="C:cell outer membrane"/>
    <property type="evidence" value="ECO:0007669"/>
    <property type="project" value="UniProtKB-SubCell"/>
</dbReference>
<dbReference type="InterPro" id="IPR000680">
    <property type="entry name" value="Borrelia_lipo"/>
</dbReference>
<dbReference type="Pfam" id="PF00921">
    <property type="entry name" value="Lipoprotein_2"/>
    <property type="match status" value="1"/>
</dbReference>
<dbReference type="SUPFAM" id="SSF74748">
    <property type="entry name" value="Variable surface antigen VlsE"/>
    <property type="match status" value="1"/>
</dbReference>
<dbReference type="PROSITE" id="PS51257">
    <property type="entry name" value="PROKAR_LIPOPROTEIN"/>
    <property type="match status" value="1"/>
</dbReference>
<organism>
    <name type="scientific">Borrelia hermsii</name>
    <dbReference type="NCBI Taxonomy" id="140"/>
    <lineage>
        <taxon>Bacteria</taxon>
        <taxon>Pseudomonadati</taxon>
        <taxon>Spirochaetota</taxon>
        <taxon>Spirochaetia</taxon>
        <taxon>Spirochaetales</taxon>
        <taxon>Borreliaceae</taxon>
        <taxon>Borrelia</taxon>
    </lineage>
</organism>